<gene>
    <name evidence="1" type="primary">psbU</name>
    <name type="ordered locus">Ava_0635</name>
</gene>
<organism>
    <name type="scientific">Trichormus variabilis (strain ATCC 29413 / PCC 7937)</name>
    <name type="common">Anabaena variabilis</name>
    <dbReference type="NCBI Taxonomy" id="240292"/>
    <lineage>
        <taxon>Bacteria</taxon>
        <taxon>Bacillati</taxon>
        <taxon>Cyanobacteriota</taxon>
        <taxon>Cyanophyceae</taxon>
        <taxon>Nostocales</taxon>
        <taxon>Nostocaceae</taxon>
        <taxon>Trichormus</taxon>
    </lineage>
</organism>
<reference key="1">
    <citation type="journal article" date="2014" name="Stand. Genomic Sci.">
        <title>Complete genome sequence of Anabaena variabilis ATCC 29413.</title>
        <authorList>
            <person name="Thiel T."/>
            <person name="Pratte B.S."/>
            <person name="Zhong J."/>
            <person name="Goodwin L."/>
            <person name="Copeland A."/>
            <person name="Lucas S."/>
            <person name="Han C."/>
            <person name="Pitluck S."/>
            <person name="Land M.L."/>
            <person name="Kyrpides N.C."/>
            <person name="Woyke T."/>
        </authorList>
    </citation>
    <scope>NUCLEOTIDE SEQUENCE [LARGE SCALE GENOMIC DNA]</scope>
    <source>
        <strain>ATCC 29413 / PCC 7937</strain>
    </source>
</reference>
<evidence type="ECO:0000255" key="1">
    <source>
        <dbReference type="HAMAP-Rule" id="MF_00589"/>
    </source>
</evidence>
<evidence type="ECO:0000305" key="2"/>
<feature type="signal peptide" evidence="1">
    <location>
        <begin position="1"/>
        <end position="29"/>
    </location>
</feature>
<feature type="chain" id="PRO_5000103834" description="Photosystem II extrinsic protein U">
    <location>
        <begin position="30"/>
        <end position="142"/>
    </location>
</feature>
<protein>
    <recommendedName>
        <fullName evidence="1">Photosystem II extrinsic protein U</fullName>
        <shortName evidence="1">PSII-U</shortName>
        <shortName evidence="1">PsbU</shortName>
    </recommendedName>
    <alternativeName>
        <fullName evidence="1">Photosystem II 12 kDa extrinsic protein</fullName>
        <shortName evidence="1">PS II complex 12 kDa extrinsic protein</shortName>
    </alternativeName>
</protein>
<sequence length="142" mass="15820">MKGLVRLLTVFSLLLGCWGWLGTTQIAQAGSLQSFLVPQVPVLAIESQNRADAKLATEFGKKIDLNNTNVRAFQQYPGLYPTLARKIIQNAPYSKVEDVLDLPGLSDGQKQLLQSNFDKFTVTELEPAFNEGDDRFNNGIYR</sequence>
<accession>Q3MFH7</accession>
<proteinExistence type="inferred from homology"/>
<comment type="function">
    <text evidence="1">One of the extrinsic, lumenal subunits of photosystem II (PSII). PSII is a light-driven water plastoquinone oxidoreductase, using light energy to abstract electrons from H(2)O, generating a proton gradient subsequently used for ATP formation. The extrinsic proteins stabilize the structure of photosystem II oxygen-evolving complex (OEC), the ion environment of oxygen evolution and protect the OEC against heat-induced inactivation.</text>
</comment>
<comment type="subunit">
    <text evidence="1">PSII is composed of 1 copy each of membrane proteins PsbA, PsbB, PsbC, PsbD, PsbE, PsbF, PsbH, PsbI, PsbJ, PsbK, PsbL, PsbM, PsbT, PsbX, PsbY, PsbZ, Psb30/Ycf12, peripheral proteins PsbO, CyanoQ (PsbQ), PsbU, PsbV and a large number of cofactors. It forms dimeric complexes.</text>
</comment>
<comment type="subcellular location">
    <subcellularLocation>
        <location evidence="1">Cellular thylakoid membrane</location>
        <topology evidence="1">Peripheral membrane protein</topology>
        <orientation evidence="1">Lumenal side</orientation>
    </subcellularLocation>
</comment>
<comment type="similarity">
    <text evidence="1">Belongs to the PsbU family.</text>
</comment>
<comment type="sequence caution" evidence="2">
    <conflict type="erroneous initiation">
        <sequence resource="EMBL-CDS" id="ABA20259"/>
    </conflict>
    <text>Extended N-terminus.</text>
</comment>
<keyword id="KW-0249">Electron transport</keyword>
<keyword id="KW-0472">Membrane</keyword>
<keyword id="KW-0602">Photosynthesis</keyword>
<keyword id="KW-0604">Photosystem II</keyword>
<keyword id="KW-0732">Signal</keyword>
<keyword id="KW-0793">Thylakoid</keyword>
<keyword id="KW-0813">Transport</keyword>
<name>PSBU_TRIV2</name>
<dbReference type="EMBL" id="CP000117">
    <property type="protein sequence ID" value="ABA20259.1"/>
    <property type="status" value="ALT_INIT"/>
    <property type="molecule type" value="Genomic_DNA"/>
</dbReference>
<dbReference type="SMR" id="Q3MFH7"/>
<dbReference type="STRING" id="240292.Ava_0635"/>
<dbReference type="KEGG" id="ava:Ava_0635"/>
<dbReference type="eggNOG" id="COG1555">
    <property type="taxonomic scope" value="Bacteria"/>
</dbReference>
<dbReference type="HOGENOM" id="CLU_141240_1_0_3"/>
<dbReference type="Proteomes" id="UP000002533">
    <property type="component" value="Chromosome"/>
</dbReference>
<dbReference type="GO" id="GO:0019898">
    <property type="term" value="C:extrinsic component of membrane"/>
    <property type="evidence" value="ECO:0007669"/>
    <property type="project" value="InterPro"/>
</dbReference>
<dbReference type="GO" id="GO:0009654">
    <property type="term" value="C:photosystem II oxygen evolving complex"/>
    <property type="evidence" value="ECO:0007669"/>
    <property type="project" value="InterPro"/>
</dbReference>
<dbReference type="GO" id="GO:0031676">
    <property type="term" value="C:plasma membrane-derived thylakoid membrane"/>
    <property type="evidence" value="ECO:0007669"/>
    <property type="project" value="UniProtKB-SubCell"/>
</dbReference>
<dbReference type="GO" id="GO:0015979">
    <property type="term" value="P:photosynthesis"/>
    <property type="evidence" value="ECO:0007669"/>
    <property type="project" value="UniProtKB-UniRule"/>
</dbReference>
<dbReference type="GO" id="GO:0042549">
    <property type="term" value="P:photosystem II stabilization"/>
    <property type="evidence" value="ECO:0007669"/>
    <property type="project" value="InterPro"/>
</dbReference>
<dbReference type="Gene3D" id="1.10.150.320">
    <property type="entry name" value="Photosystem II 12 kDa extrinsic protein"/>
    <property type="match status" value="1"/>
</dbReference>
<dbReference type="HAMAP" id="MF_00589">
    <property type="entry name" value="PSII_PsbU"/>
    <property type="match status" value="1"/>
</dbReference>
<dbReference type="InterPro" id="IPR010527">
    <property type="entry name" value="PSII_PsbU"/>
</dbReference>
<dbReference type="NCBIfam" id="NF002708">
    <property type="entry name" value="PRK02515.1"/>
    <property type="match status" value="1"/>
</dbReference>
<dbReference type="Pfam" id="PF06514">
    <property type="entry name" value="PsbU"/>
    <property type="match status" value="1"/>
</dbReference>
<dbReference type="SUPFAM" id="SSF81585">
    <property type="entry name" value="PsbU/PolX domain-like"/>
    <property type="match status" value="1"/>
</dbReference>